<organism>
    <name type="scientific">Bifidobacterium adolescentis (strain ATCC 15703 / DSM 20083 / NCTC 11814 / E194a)</name>
    <dbReference type="NCBI Taxonomy" id="367928"/>
    <lineage>
        <taxon>Bacteria</taxon>
        <taxon>Bacillati</taxon>
        <taxon>Actinomycetota</taxon>
        <taxon>Actinomycetes</taxon>
        <taxon>Bifidobacteriales</taxon>
        <taxon>Bifidobacteriaceae</taxon>
        <taxon>Bifidobacterium</taxon>
    </lineage>
</organism>
<reference key="1">
    <citation type="submission" date="2006-12" db="EMBL/GenBank/DDBJ databases">
        <title>Bifidobacterium adolescentis complete genome sequence.</title>
        <authorList>
            <person name="Suzuki T."/>
            <person name="Tsuda Y."/>
            <person name="Kanou N."/>
            <person name="Inoue T."/>
            <person name="Kumazaki K."/>
            <person name="Nagano S."/>
            <person name="Hirai S."/>
            <person name="Tanaka K."/>
            <person name="Watanabe K."/>
        </authorList>
    </citation>
    <scope>NUCLEOTIDE SEQUENCE [LARGE SCALE GENOMIC DNA]</scope>
    <source>
        <strain>ATCC 15703 / DSM 20083 / NCTC 11814 / E194a</strain>
    </source>
</reference>
<gene>
    <name evidence="1" type="primary">rplF</name>
    <name type="ordered locus">BAD_0336</name>
</gene>
<feature type="chain" id="PRO_1000055198" description="Large ribosomal subunit protein uL6">
    <location>
        <begin position="1"/>
        <end position="179"/>
    </location>
</feature>
<proteinExistence type="inferred from homology"/>
<comment type="function">
    <text evidence="1">This protein binds to the 23S rRNA, and is important in its secondary structure. It is located near the subunit interface in the base of the L7/L12 stalk, and near the tRNA binding site of the peptidyltransferase center.</text>
</comment>
<comment type="subunit">
    <text evidence="1">Part of the 50S ribosomal subunit.</text>
</comment>
<comment type="similarity">
    <text evidence="1">Belongs to the universal ribosomal protein uL6 family.</text>
</comment>
<dbReference type="EMBL" id="AP009256">
    <property type="protein sequence ID" value="BAF39117.1"/>
    <property type="molecule type" value="Genomic_DNA"/>
</dbReference>
<dbReference type="RefSeq" id="WP_003808049.1">
    <property type="nucleotide sequence ID" value="NZ_CAXVNC010000001.1"/>
</dbReference>
<dbReference type="SMR" id="A1A084"/>
<dbReference type="STRING" id="367928.BAD_0336"/>
<dbReference type="PaxDb" id="1680-BADO_0343"/>
<dbReference type="GeneID" id="4556675"/>
<dbReference type="KEGG" id="bad:BAD_0336"/>
<dbReference type="HOGENOM" id="CLU_065464_1_2_11"/>
<dbReference type="Proteomes" id="UP000008702">
    <property type="component" value="Chromosome"/>
</dbReference>
<dbReference type="GO" id="GO:0022625">
    <property type="term" value="C:cytosolic large ribosomal subunit"/>
    <property type="evidence" value="ECO:0007669"/>
    <property type="project" value="TreeGrafter"/>
</dbReference>
<dbReference type="GO" id="GO:0019843">
    <property type="term" value="F:rRNA binding"/>
    <property type="evidence" value="ECO:0007669"/>
    <property type="project" value="UniProtKB-UniRule"/>
</dbReference>
<dbReference type="GO" id="GO:0003735">
    <property type="term" value="F:structural constituent of ribosome"/>
    <property type="evidence" value="ECO:0007669"/>
    <property type="project" value="InterPro"/>
</dbReference>
<dbReference type="GO" id="GO:0002181">
    <property type="term" value="P:cytoplasmic translation"/>
    <property type="evidence" value="ECO:0007669"/>
    <property type="project" value="TreeGrafter"/>
</dbReference>
<dbReference type="FunFam" id="3.90.930.12:FF:000001">
    <property type="entry name" value="50S ribosomal protein L6"/>
    <property type="match status" value="1"/>
</dbReference>
<dbReference type="Gene3D" id="3.90.930.12">
    <property type="entry name" value="Ribosomal protein L6, alpha-beta domain"/>
    <property type="match status" value="2"/>
</dbReference>
<dbReference type="HAMAP" id="MF_01365_B">
    <property type="entry name" value="Ribosomal_uL6_B"/>
    <property type="match status" value="1"/>
</dbReference>
<dbReference type="InterPro" id="IPR000702">
    <property type="entry name" value="Ribosomal_uL6-like"/>
</dbReference>
<dbReference type="InterPro" id="IPR036789">
    <property type="entry name" value="Ribosomal_uL6-like_a/b-dom_sf"/>
</dbReference>
<dbReference type="InterPro" id="IPR020040">
    <property type="entry name" value="Ribosomal_uL6_a/b-dom"/>
</dbReference>
<dbReference type="InterPro" id="IPR019906">
    <property type="entry name" value="Ribosomal_uL6_bac-type"/>
</dbReference>
<dbReference type="InterPro" id="IPR002358">
    <property type="entry name" value="Ribosomal_uL6_CS"/>
</dbReference>
<dbReference type="NCBIfam" id="TIGR03654">
    <property type="entry name" value="L6_bact"/>
    <property type="match status" value="1"/>
</dbReference>
<dbReference type="PANTHER" id="PTHR11655">
    <property type="entry name" value="60S/50S RIBOSOMAL PROTEIN L6/L9"/>
    <property type="match status" value="1"/>
</dbReference>
<dbReference type="PANTHER" id="PTHR11655:SF14">
    <property type="entry name" value="LARGE RIBOSOMAL SUBUNIT PROTEIN UL6M"/>
    <property type="match status" value="1"/>
</dbReference>
<dbReference type="Pfam" id="PF00347">
    <property type="entry name" value="Ribosomal_L6"/>
    <property type="match status" value="2"/>
</dbReference>
<dbReference type="PIRSF" id="PIRSF002162">
    <property type="entry name" value="Ribosomal_L6"/>
    <property type="match status" value="1"/>
</dbReference>
<dbReference type="PRINTS" id="PR00059">
    <property type="entry name" value="RIBOSOMALL6"/>
</dbReference>
<dbReference type="SUPFAM" id="SSF56053">
    <property type="entry name" value="Ribosomal protein L6"/>
    <property type="match status" value="2"/>
</dbReference>
<dbReference type="PROSITE" id="PS00525">
    <property type="entry name" value="RIBOSOMAL_L6_1"/>
    <property type="match status" value="1"/>
</dbReference>
<sequence length="179" mass="18955">MASHIGKLPVTIPAGVEVKIDGQSFTAKGAKGTDSYEIPEGITAVVEGNEVVLTPADDLRPTRAKHGLARSIVAGMVKGVHEGYAKTLEIVGTGYRAQMKGKGIEFSLGYSHTITVEPPAGIEFELPNPNQVIVKGIDKQAVGQCAANIRKLRAPEPYKGKGIKYADEHILRKAGKAGK</sequence>
<keyword id="KW-1185">Reference proteome</keyword>
<keyword id="KW-0687">Ribonucleoprotein</keyword>
<keyword id="KW-0689">Ribosomal protein</keyword>
<keyword id="KW-0694">RNA-binding</keyword>
<keyword id="KW-0699">rRNA-binding</keyword>
<protein>
    <recommendedName>
        <fullName evidence="1">Large ribosomal subunit protein uL6</fullName>
    </recommendedName>
    <alternativeName>
        <fullName evidence="2">50S ribosomal protein L6</fullName>
    </alternativeName>
</protein>
<accession>A1A084</accession>
<name>RL6_BIFAA</name>
<evidence type="ECO:0000255" key="1">
    <source>
        <dbReference type="HAMAP-Rule" id="MF_01365"/>
    </source>
</evidence>
<evidence type="ECO:0000305" key="2"/>